<name>RL23_CHLT3</name>
<sequence length="105" mass="11880">MRNALIYPILTEKATRMTEVQTQYTFKVNPRANKLEIRKAVEEKFNVDVDSVRTVICRGKRKRQFTRKGLIEGKKSNWKKAIVTLKDGATIDFYGATASAGQANG</sequence>
<gene>
    <name evidence="1" type="primary">rplW</name>
    <name type="ordered locus">Ctha_1090</name>
</gene>
<dbReference type="EMBL" id="CP001100">
    <property type="protein sequence ID" value="ACF13554.1"/>
    <property type="molecule type" value="Genomic_DNA"/>
</dbReference>
<dbReference type="RefSeq" id="WP_012499638.1">
    <property type="nucleotide sequence ID" value="NC_011026.1"/>
</dbReference>
<dbReference type="SMR" id="B3QY26"/>
<dbReference type="STRING" id="517418.Ctha_1090"/>
<dbReference type="KEGG" id="cts:Ctha_1090"/>
<dbReference type="eggNOG" id="COG0089">
    <property type="taxonomic scope" value="Bacteria"/>
</dbReference>
<dbReference type="HOGENOM" id="CLU_037562_3_0_10"/>
<dbReference type="OrthoDB" id="9797862at2"/>
<dbReference type="Proteomes" id="UP000001208">
    <property type="component" value="Chromosome"/>
</dbReference>
<dbReference type="GO" id="GO:1990904">
    <property type="term" value="C:ribonucleoprotein complex"/>
    <property type="evidence" value="ECO:0007669"/>
    <property type="project" value="UniProtKB-KW"/>
</dbReference>
<dbReference type="GO" id="GO:0005840">
    <property type="term" value="C:ribosome"/>
    <property type="evidence" value="ECO:0007669"/>
    <property type="project" value="UniProtKB-KW"/>
</dbReference>
<dbReference type="GO" id="GO:0019843">
    <property type="term" value="F:rRNA binding"/>
    <property type="evidence" value="ECO:0007669"/>
    <property type="project" value="UniProtKB-UniRule"/>
</dbReference>
<dbReference type="GO" id="GO:0003735">
    <property type="term" value="F:structural constituent of ribosome"/>
    <property type="evidence" value="ECO:0007669"/>
    <property type="project" value="InterPro"/>
</dbReference>
<dbReference type="GO" id="GO:0006412">
    <property type="term" value="P:translation"/>
    <property type="evidence" value="ECO:0007669"/>
    <property type="project" value="UniProtKB-UniRule"/>
</dbReference>
<dbReference type="FunFam" id="3.30.70.330:FF:000001">
    <property type="entry name" value="50S ribosomal protein L23"/>
    <property type="match status" value="1"/>
</dbReference>
<dbReference type="Gene3D" id="3.30.70.330">
    <property type="match status" value="1"/>
</dbReference>
<dbReference type="HAMAP" id="MF_01369_B">
    <property type="entry name" value="Ribosomal_uL23_B"/>
    <property type="match status" value="1"/>
</dbReference>
<dbReference type="InterPro" id="IPR012677">
    <property type="entry name" value="Nucleotide-bd_a/b_plait_sf"/>
</dbReference>
<dbReference type="InterPro" id="IPR013025">
    <property type="entry name" value="Ribosomal_uL23-like"/>
</dbReference>
<dbReference type="InterPro" id="IPR012678">
    <property type="entry name" value="Ribosomal_uL23/eL15/eS24_sf"/>
</dbReference>
<dbReference type="NCBIfam" id="NF004359">
    <property type="entry name" value="PRK05738.1-3"/>
    <property type="match status" value="1"/>
</dbReference>
<dbReference type="NCBIfam" id="NF004363">
    <property type="entry name" value="PRK05738.2-4"/>
    <property type="match status" value="1"/>
</dbReference>
<dbReference type="PANTHER" id="PTHR11620">
    <property type="entry name" value="60S RIBOSOMAL PROTEIN L23A"/>
    <property type="match status" value="1"/>
</dbReference>
<dbReference type="Pfam" id="PF00276">
    <property type="entry name" value="Ribosomal_L23"/>
    <property type="match status" value="1"/>
</dbReference>
<dbReference type="SUPFAM" id="SSF54189">
    <property type="entry name" value="Ribosomal proteins S24e, L23 and L15e"/>
    <property type="match status" value="1"/>
</dbReference>
<organism>
    <name type="scientific">Chloroherpeton thalassium (strain ATCC 35110 / GB-78)</name>
    <dbReference type="NCBI Taxonomy" id="517418"/>
    <lineage>
        <taxon>Bacteria</taxon>
        <taxon>Pseudomonadati</taxon>
        <taxon>Chlorobiota</taxon>
        <taxon>Chlorobiia</taxon>
        <taxon>Chlorobiales</taxon>
        <taxon>Chloroherpetonaceae</taxon>
        <taxon>Chloroherpeton</taxon>
    </lineage>
</organism>
<reference key="1">
    <citation type="submission" date="2008-06" db="EMBL/GenBank/DDBJ databases">
        <title>Complete sequence of Chloroherpeton thalassium ATCC 35110.</title>
        <authorList>
            <consortium name="US DOE Joint Genome Institute"/>
            <person name="Lucas S."/>
            <person name="Copeland A."/>
            <person name="Lapidus A."/>
            <person name="Glavina del Rio T."/>
            <person name="Dalin E."/>
            <person name="Tice H."/>
            <person name="Bruce D."/>
            <person name="Goodwin L."/>
            <person name="Pitluck S."/>
            <person name="Schmutz J."/>
            <person name="Larimer F."/>
            <person name="Land M."/>
            <person name="Hauser L."/>
            <person name="Kyrpides N."/>
            <person name="Mikhailova N."/>
            <person name="Liu Z."/>
            <person name="Li T."/>
            <person name="Zhao F."/>
            <person name="Overmann J."/>
            <person name="Bryant D.A."/>
            <person name="Richardson P."/>
        </authorList>
    </citation>
    <scope>NUCLEOTIDE SEQUENCE [LARGE SCALE GENOMIC DNA]</scope>
    <source>
        <strain>ATCC 35110 / GB-78</strain>
    </source>
</reference>
<accession>B3QY26</accession>
<keyword id="KW-1185">Reference proteome</keyword>
<keyword id="KW-0687">Ribonucleoprotein</keyword>
<keyword id="KW-0689">Ribosomal protein</keyword>
<keyword id="KW-0694">RNA-binding</keyword>
<keyword id="KW-0699">rRNA-binding</keyword>
<comment type="function">
    <text evidence="1">One of the early assembly proteins it binds 23S rRNA. One of the proteins that surrounds the polypeptide exit tunnel on the outside of the ribosome. Forms the main docking site for trigger factor binding to the ribosome.</text>
</comment>
<comment type="subunit">
    <text evidence="1">Part of the 50S ribosomal subunit. Contacts protein L29, and trigger factor when it is bound to the ribosome.</text>
</comment>
<comment type="similarity">
    <text evidence="1">Belongs to the universal ribosomal protein uL23 family.</text>
</comment>
<protein>
    <recommendedName>
        <fullName evidence="1">Large ribosomal subunit protein uL23</fullName>
    </recommendedName>
    <alternativeName>
        <fullName evidence="2">50S ribosomal protein L23</fullName>
    </alternativeName>
</protein>
<feature type="chain" id="PRO_1000144552" description="Large ribosomal subunit protein uL23">
    <location>
        <begin position="1"/>
        <end position="105"/>
    </location>
</feature>
<evidence type="ECO:0000255" key="1">
    <source>
        <dbReference type="HAMAP-Rule" id="MF_01369"/>
    </source>
</evidence>
<evidence type="ECO:0000305" key="2"/>
<proteinExistence type="inferred from homology"/>